<sequence>MIQQESRLKVADNSGAREVLVIKVLGGSGRRYANIGDVVVATVKDATPGGVVKKGQVVKAVVVRTKRGVRRSDGSYIRFDENACVIIRDDKSPRGTRIFGPVARELRDKDFMKIISLAPEVI</sequence>
<accession>A4IJJ9</accession>
<feature type="chain" id="PRO_1000055586" description="Large ribosomal subunit protein uL14">
    <location>
        <begin position="1"/>
        <end position="122"/>
    </location>
</feature>
<name>RL14_GEOTN</name>
<evidence type="ECO:0000255" key="1">
    <source>
        <dbReference type="HAMAP-Rule" id="MF_01367"/>
    </source>
</evidence>
<evidence type="ECO:0000305" key="2"/>
<dbReference type="EMBL" id="CP000557">
    <property type="protein sequence ID" value="ABO65503.1"/>
    <property type="molecule type" value="Genomic_DNA"/>
</dbReference>
<dbReference type="RefSeq" id="WP_008881934.1">
    <property type="nucleotide sequence ID" value="NC_009328.1"/>
</dbReference>
<dbReference type="SMR" id="A4IJJ9"/>
<dbReference type="GeneID" id="87622316"/>
<dbReference type="KEGG" id="gtn:GTNG_0116"/>
<dbReference type="eggNOG" id="COG0093">
    <property type="taxonomic scope" value="Bacteria"/>
</dbReference>
<dbReference type="HOGENOM" id="CLU_095071_2_1_9"/>
<dbReference type="Proteomes" id="UP000001578">
    <property type="component" value="Chromosome"/>
</dbReference>
<dbReference type="GO" id="GO:0022625">
    <property type="term" value="C:cytosolic large ribosomal subunit"/>
    <property type="evidence" value="ECO:0007669"/>
    <property type="project" value="TreeGrafter"/>
</dbReference>
<dbReference type="GO" id="GO:0070180">
    <property type="term" value="F:large ribosomal subunit rRNA binding"/>
    <property type="evidence" value="ECO:0007669"/>
    <property type="project" value="TreeGrafter"/>
</dbReference>
<dbReference type="GO" id="GO:0003735">
    <property type="term" value="F:structural constituent of ribosome"/>
    <property type="evidence" value="ECO:0007669"/>
    <property type="project" value="InterPro"/>
</dbReference>
<dbReference type="GO" id="GO:0006412">
    <property type="term" value="P:translation"/>
    <property type="evidence" value="ECO:0007669"/>
    <property type="project" value="UniProtKB-UniRule"/>
</dbReference>
<dbReference type="CDD" id="cd00337">
    <property type="entry name" value="Ribosomal_uL14"/>
    <property type="match status" value="1"/>
</dbReference>
<dbReference type="FunFam" id="2.40.150.20:FF:000001">
    <property type="entry name" value="50S ribosomal protein L14"/>
    <property type="match status" value="1"/>
</dbReference>
<dbReference type="Gene3D" id="2.40.150.20">
    <property type="entry name" value="Ribosomal protein L14"/>
    <property type="match status" value="1"/>
</dbReference>
<dbReference type="HAMAP" id="MF_01367">
    <property type="entry name" value="Ribosomal_uL14"/>
    <property type="match status" value="1"/>
</dbReference>
<dbReference type="InterPro" id="IPR000218">
    <property type="entry name" value="Ribosomal_uL14"/>
</dbReference>
<dbReference type="InterPro" id="IPR005745">
    <property type="entry name" value="Ribosomal_uL14_bac-type"/>
</dbReference>
<dbReference type="InterPro" id="IPR019972">
    <property type="entry name" value="Ribosomal_uL14_CS"/>
</dbReference>
<dbReference type="InterPro" id="IPR036853">
    <property type="entry name" value="Ribosomal_uL14_sf"/>
</dbReference>
<dbReference type="NCBIfam" id="TIGR01067">
    <property type="entry name" value="rplN_bact"/>
    <property type="match status" value="1"/>
</dbReference>
<dbReference type="PANTHER" id="PTHR11761">
    <property type="entry name" value="50S/60S RIBOSOMAL PROTEIN L14/L23"/>
    <property type="match status" value="1"/>
</dbReference>
<dbReference type="PANTHER" id="PTHR11761:SF3">
    <property type="entry name" value="LARGE RIBOSOMAL SUBUNIT PROTEIN UL14M"/>
    <property type="match status" value="1"/>
</dbReference>
<dbReference type="Pfam" id="PF00238">
    <property type="entry name" value="Ribosomal_L14"/>
    <property type="match status" value="1"/>
</dbReference>
<dbReference type="SMART" id="SM01374">
    <property type="entry name" value="Ribosomal_L14"/>
    <property type="match status" value="1"/>
</dbReference>
<dbReference type="SUPFAM" id="SSF50193">
    <property type="entry name" value="Ribosomal protein L14"/>
    <property type="match status" value="1"/>
</dbReference>
<dbReference type="PROSITE" id="PS00049">
    <property type="entry name" value="RIBOSOMAL_L14"/>
    <property type="match status" value="1"/>
</dbReference>
<keyword id="KW-0687">Ribonucleoprotein</keyword>
<keyword id="KW-0689">Ribosomal protein</keyword>
<keyword id="KW-0694">RNA-binding</keyword>
<keyword id="KW-0699">rRNA-binding</keyword>
<gene>
    <name evidence="1" type="primary">rplN</name>
    <name type="ordered locus">GTNG_0116</name>
</gene>
<organism>
    <name type="scientific">Geobacillus thermodenitrificans (strain NG80-2)</name>
    <dbReference type="NCBI Taxonomy" id="420246"/>
    <lineage>
        <taxon>Bacteria</taxon>
        <taxon>Bacillati</taxon>
        <taxon>Bacillota</taxon>
        <taxon>Bacilli</taxon>
        <taxon>Bacillales</taxon>
        <taxon>Anoxybacillaceae</taxon>
        <taxon>Geobacillus</taxon>
    </lineage>
</organism>
<reference key="1">
    <citation type="journal article" date="2007" name="Proc. Natl. Acad. Sci. U.S.A.">
        <title>Genome and proteome of long-chain alkane degrading Geobacillus thermodenitrificans NG80-2 isolated from a deep-subsurface oil reservoir.</title>
        <authorList>
            <person name="Feng L."/>
            <person name="Wang W."/>
            <person name="Cheng J."/>
            <person name="Ren Y."/>
            <person name="Zhao G."/>
            <person name="Gao C."/>
            <person name="Tang Y."/>
            <person name="Liu X."/>
            <person name="Han W."/>
            <person name="Peng X."/>
            <person name="Liu R."/>
            <person name="Wang L."/>
        </authorList>
    </citation>
    <scope>NUCLEOTIDE SEQUENCE [LARGE SCALE GENOMIC DNA]</scope>
    <source>
        <strain>NG80-2</strain>
    </source>
</reference>
<proteinExistence type="inferred from homology"/>
<protein>
    <recommendedName>
        <fullName evidence="1">Large ribosomal subunit protein uL14</fullName>
    </recommendedName>
    <alternativeName>
        <fullName evidence="2">50S ribosomal protein L14</fullName>
    </alternativeName>
</protein>
<comment type="function">
    <text evidence="1">Binds to 23S rRNA. Forms part of two intersubunit bridges in the 70S ribosome.</text>
</comment>
<comment type="subunit">
    <text evidence="1">Part of the 50S ribosomal subunit. Forms a cluster with proteins L3 and L19. In the 70S ribosome, L14 and L19 interact and together make contacts with the 16S rRNA in bridges B5 and B8.</text>
</comment>
<comment type="similarity">
    <text evidence="1">Belongs to the universal ribosomal protein uL14 family.</text>
</comment>